<sequence length="466" mass="53846">MITLYNTLTRQKEPFEPLEPGKVKMYVCGPTVYNYIHIGNARPAINYDVVRRYFEYKGYDVNYVSNFTDVDDKLIKRSKELNESVPEIADRYIQAFYEDTGALNVKKATSNPRVMNHMDDIIEFIKDLVDKGYAYESGGDVYFRTRKFEGYGKLSHQSIDDLKVGARIESGEQKEDALDFTLWKKAKPGEISWDSPFGKGRPGWHIECSVMAYNELGETIDIHAGGSDLQFPHHENEIAQSEAHNHAPFANYWMHNGFINIDNEKMSKSLGNFVLVHDIIKEVDPDVLRFFMISVHYRSPINYNMELVESAKSGLERIRNSYQAIEEREAIATDIEDQSEYIEQIDQLLAQFEKVMDDDFNTANAITTWYDLAKLANKYVLENTTSKKVIERFKEVFQIFSDVLGIPLKGKQQDELLDEDIEALIEERNEARKNKDFARADEIRDQLKAQNIILEDTAQGVRFKRG</sequence>
<feature type="chain" id="PRO_1000117306" description="Cysteine--tRNA ligase">
    <location>
        <begin position="1"/>
        <end position="466"/>
    </location>
</feature>
<feature type="short sequence motif" description="'HIGH' region">
    <location>
        <begin position="30"/>
        <end position="40"/>
    </location>
</feature>
<feature type="short sequence motif" description="'KMSKS' region">
    <location>
        <begin position="265"/>
        <end position="269"/>
    </location>
</feature>
<feature type="binding site" evidence="1">
    <location>
        <position position="28"/>
    </location>
    <ligand>
        <name>Zn(2+)</name>
        <dbReference type="ChEBI" id="CHEBI:29105"/>
    </ligand>
</feature>
<feature type="binding site" evidence="1">
    <location>
        <position position="208"/>
    </location>
    <ligand>
        <name>Zn(2+)</name>
        <dbReference type="ChEBI" id="CHEBI:29105"/>
    </ligand>
</feature>
<feature type="binding site" evidence="1">
    <location>
        <position position="233"/>
    </location>
    <ligand>
        <name>Zn(2+)</name>
        <dbReference type="ChEBI" id="CHEBI:29105"/>
    </ligand>
</feature>
<feature type="binding site" evidence="1">
    <location>
        <position position="237"/>
    </location>
    <ligand>
        <name>Zn(2+)</name>
        <dbReference type="ChEBI" id="CHEBI:29105"/>
    </ligand>
</feature>
<feature type="binding site" evidence="1">
    <location>
        <position position="268"/>
    </location>
    <ligand>
        <name>ATP</name>
        <dbReference type="ChEBI" id="CHEBI:30616"/>
    </ligand>
</feature>
<dbReference type="EC" id="6.1.1.16" evidence="1"/>
<dbReference type="EMBL" id="AM295250">
    <property type="protein sequence ID" value="CAL27099.1"/>
    <property type="molecule type" value="Genomic_DNA"/>
</dbReference>
<dbReference type="RefSeq" id="WP_012664214.1">
    <property type="nucleotide sequence ID" value="NC_012121.1"/>
</dbReference>
<dbReference type="SMR" id="B9DKW3"/>
<dbReference type="GeneID" id="93795115"/>
<dbReference type="KEGG" id="sca:SCA_0186"/>
<dbReference type="eggNOG" id="COG0215">
    <property type="taxonomic scope" value="Bacteria"/>
</dbReference>
<dbReference type="HOGENOM" id="CLU_013528_0_1_9"/>
<dbReference type="OrthoDB" id="9815130at2"/>
<dbReference type="BioCyc" id="SCAR396513:SCA_RS00965-MONOMER"/>
<dbReference type="Proteomes" id="UP000000444">
    <property type="component" value="Chromosome"/>
</dbReference>
<dbReference type="GO" id="GO:0005829">
    <property type="term" value="C:cytosol"/>
    <property type="evidence" value="ECO:0007669"/>
    <property type="project" value="TreeGrafter"/>
</dbReference>
<dbReference type="GO" id="GO:0005524">
    <property type="term" value="F:ATP binding"/>
    <property type="evidence" value="ECO:0007669"/>
    <property type="project" value="UniProtKB-UniRule"/>
</dbReference>
<dbReference type="GO" id="GO:0004817">
    <property type="term" value="F:cysteine-tRNA ligase activity"/>
    <property type="evidence" value="ECO:0007669"/>
    <property type="project" value="UniProtKB-UniRule"/>
</dbReference>
<dbReference type="GO" id="GO:0008270">
    <property type="term" value="F:zinc ion binding"/>
    <property type="evidence" value="ECO:0007669"/>
    <property type="project" value="UniProtKB-UniRule"/>
</dbReference>
<dbReference type="GO" id="GO:0006423">
    <property type="term" value="P:cysteinyl-tRNA aminoacylation"/>
    <property type="evidence" value="ECO:0007669"/>
    <property type="project" value="UniProtKB-UniRule"/>
</dbReference>
<dbReference type="CDD" id="cd00672">
    <property type="entry name" value="CysRS_core"/>
    <property type="match status" value="1"/>
</dbReference>
<dbReference type="FunFam" id="1.20.120.1910:FF:000002">
    <property type="entry name" value="Cysteine--tRNA ligase"/>
    <property type="match status" value="1"/>
</dbReference>
<dbReference type="FunFam" id="3.40.50.620:FF:000009">
    <property type="entry name" value="Cysteine--tRNA ligase"/>
    <property type="match status" value="1"/>
</dbReference>
<dbReference type="Gene3D" id="1.20.120.1910">
    <property type="entry name" value="Cysteine-tRNA ligase, C-terminal anti-codon recognition domain"/>
    <property type="match status" value="1"/>
</dbReference>
<dbReference type="Gene3D" id="3.40.50.620">
    <property type="entry name" value="HUPs"/>
    <property type="match status" value="1"/>
</dbReference>
<dbReference type="HAMAP" id="MF_00041">
    <property type="entry name" value="Cys_tRNA_synth"/>
    <property type="match status" value="1"/>
</dbReference>
<dbReference type="InterPro" id="IPR015803">
    <property type="entry name" value="Cys-tRNA-ligase"/>
</dbReference>
<dbReference type="InterPro" id="IPR015273">
    <property type="entry name" value="Cys-tRNA-synt_Ia_DALR"/>
</dbReference>
<dbReference type="InterPro" id="IPR024909">
    <property type="entry name" value="Cys-tRNA/MSH_ligase"/>
</dbReference>
<dbReference type="InterPro" id="IPR056411">
    <property type="entry name" value="CysS_C"/>
</dbReference>
<dbReference type="InterPro" id="IPR014729">
    <property type="entry name" value="Rossmann-like_a/b/a_fold"/>
</dbReference>
<dbReference type="InterPro" id="IPR032678">
    <property type="entry name" value="tRNA-synt_1_cat_dom"/>
</dbReference>
<dbReference type="InterPro" id="IPR009080">
    <property type="entry name" value="tRNAsynth_Ia_anticodon-bd"/>
</dbReference>
<dbReference type="NCBIfam" id="TIGR00435">
    <property type="entry name" value="cysS"/>
    <property type="match status" value="1"/>
</dbReference>
<dbReference type="PANTHER" id="PTHR10890:SF3">
    <property type="entry name" value="CYSTEINE--TRNA LIGASE, CYTOPLASMIC"/>
    <property type="match status" value="1"/>
</dbReference>
<dbReference type="PANTHER" id="PTHR10890">
    <property type="entry name" value="CYSTEINYL-TRNA SYNTHETASE"/>
    <property type="match status" value="1"/>
</dbReference>
<dbReference type="Pfam" id="PF23493">
    <property type="entry name" value="CysS_C"/>
    <property type="match status" value="1"/>
</dbReference>
<dbReference type="Pfam" id="PF09190">
    <property type="entry name" value="DALR_2"/>
    <property type="match status" value="1"/>
</dbReference>
<dbReference type="Pfam" id="PF01406">
    <property type="entry name" value="tRNA-synt_1e"/>
    <property type="match status" value="1"/>
</dbReference>
<dbReference type="PRINTS" id="PR00983">
    <property type="entry name" value="TRNASYNTHCYS"/>
</dbReference>
<dbReference type="SMART" id="SM00840">
    <property type="entry name" value="DALR_2"/>
    <property type="match status" value="1"/>
</dbReference>
<dbReference type="SUPFAM" id="SSF47323">
    <property type="entry name" value="Anticodon-binding domain of a subclass of class I aminoacyl-tRNA synthetases"/>
    <property type="match status" value="1"/>
</dbReference>
<dbReference type="SUPFAM" id="SSF52374">
    <property type="entry name" value="Nucleotidylyl transferase"/>
    <property type="match status" value="1"/>
</dbReference>
<reference key="1">
    <citation type="journal article" date="2009" name="Appl. Environ. Microbiol.">
        <title>Genome analysis of the meat starter culture bacterium Staphylococcus carnosus TM300.</title>
        <authorList>
            <person name="Rosenstein R."/>
            <person name="Nerz C."/>
            <person name="Biswas L."/>
            <person name="Resch A."/>
            <person name="Raddatz G."/>
            <person name="Schuster S.C."/>
            <person name="Goetz F."/>
        </authorList>
    </citation>
    <scope>NUCLEOTIDE SEQUENCE [LARGE SCALE GENOMIC DNA]</scope>
    <source>
        <strain>TM300</strain>
    </source>
</reference>
<organism>
    <name type="scientific">Staphylococcus carnosus (strain TM300)</name>
    <dbReference type="NCBI Taxonomy" id="396513"/>
    <lineage>
        <taxon>Bacteria</taxon>
        <taxon>Bacillati</taxon>
        <taxon>Bacillota</taxon>
        <taxon>Bacilli</taxon>
        <taxon>Bacillales</taxon>
        <taxon>Staphylococcaceae</taxon>
        <taxon>Staphylococcus</taxon>
    </lineage>
</organism>
<gene>
    <name evidence="1" type="primary">cysS</name>
    <name type="ordered locus">Sca_0186</name>
</gene>
<proteinExistence type="inferred from homology"/>
<comment type="catalytic activity">
    <reaction evidence="1">
        <text>tRNA(Cys) + L-cysteine + ATP = L-cysteinyl-tRNA(Cys) + AMP + diphosphate</text>
        <dbReference type="Rhea" id="RHEA:17773"/>
        <dbReference type="Rhea" id="RHEA-COMP:9661"/>
        <dbReference type="Rhea" id="RHEA-COMP:9679"/>
        <dbReference type="ChEBI" id="CHEBI:30616"/>
        <dbReference type="ChEBI" id="CHEBI:33019"/>
        <dbReference type="ChEBI" id="CHEBI:35235"/>
        <dbReference type="ChEBI" id="CHEBI:78442"/>
        <dbReference type="ChEBI" id="CHEBI:78517"/>
        <dbReference type="ChEBI" id="CHEBI:456215"/>
        <dbReference type="EC" id="6.1.1.16"/>
    </reaction>
</comment>
<comment type="cofactor">
    <cofactor evidence="1">
        <name>Zn(2+)</name>
        <dbReference type="ChEBI" id="CHEBI:29105"/>
    </cofactor>
    <text evidence="1">Binds 1 zinc ion per subunit.</text>
</comment>
<comment type="subunit">
    <text evidence="1">Monomer.</text>
</comment>
<comment type="subcellular location">
    <subcellularLocation>
        <location evidence="1">Cytoplasm</location>
    </subcellularLocation>
</comment>
<comment type="similarity">
    <text evidence="1">Belongs to the class-I aminoacyl-tRNA synthetase family.</text>
</comment>
<protein>
    <recommendedName>
        <fullName evidence="1">Cysteine--tRNA ligase</fullName>
        <ecNumber evidence="1">6.1.1.16</ecNumber>
    </recommendedName>
    <alternativeName>
        <fullName evidence="1">Cysteinyl-tRNA synthetase</fullName>
        <shortName evidence="1">CysRS</shortName>
    </alternativeName>
</protein>
<accession>B9DKW3</accession>
<keyword id="KW-0030">Aminoacyl-tRNA synthetase</keyword>
<keyword id="KW-0067">ATP-binding</keyword>
<keyword id="KW-0963">Cytoplasm</keyword>
<keyword id="KW-0436">Ligase</keyword>
<keyword id="KW-0479">Metal-binding</keyword>
<keyword id="KW-0547">Nucleotide-binding</keyword>
<keyword id="KW-0648">Protein biosynthesis</keyword>
<keyword id="KW-1185">Reference proteome</keyword>
<keyword id="KW-0862">Zinc</keyword>
<name>SYC_STACT</name>
<evidence type="ECO:0000255" key="1">
    <source>
        <dbReference type="HAMAP-Rule" id="MF_00041"/>
    </source>
</evidence>